<name>HBA_PHACO</name>
<comment type="function">
    <text>Involved in oxygen transport from the lung to the various peripheral tissues.</text>
</comment>
<comment type="subunit">
    <text>Heterotetramer of two alpha chains and two beta chains.</text>
</comment>
<comment type="tissue specificity">
    <text>Red blood cells.</text>
</comment>
<comment type="miscellaneous">
    <text>This alpha chain is from the adult major tetrameric component, which has been called hemoglobin A or AII.</text>
</comment>
<comment type="similarity">
    <text evidence="1">Belongs to the globin family.</text>
</comment>
<dbReference type="PIR" id="A02316">
    <property type="entry name" value="HAFEA"/>
</dbReference>
<dbReference type="SMR" id="P01995"/>
<dbReference type="GO" id="GO:0072562">
    <property type="term" value="C:blood microparticle"/>
    <property type="evidence" value="ECO:0007669"/>
    <property type="project" value="TreeGrafter"/>
</dbReference>
<dbReference type="GO" id="GO:0031838">
    <property type="term" value="C:haptoglobin-hemoglobin complex"/>
    <property type="evidence" value="ECO:0007669"/>
    <property type="project" value="TreeGrafter"/>
</dbReference>
<dbReference type="GO" id="GO:0005833">
    <property type="term" value="C:hemoglobin complex"/>
    <property type="evidence" value="ECO:0007669"/>
    <property type="project" value="InterPro"/>
</dbReference>
<dbReference type="GO" id="GO:0031720">
    <property type="term" value="F:haptoglobin binding"/>
    <property type="evidence" value="ECO:0007669"/>
    <property type="project" value="TreeGrafter"/>
</dbReference>
<dbReference type="GO" id="GO:0020037">
    <property type="term" value="F:heme binding"/>
    <property type="evidence" value="ECO:0007669"/>
    <property type="project" value="InterPro"/>
</dbReference>
<dbReference type="GO" id="GO:0005506">
    <property type="term" value="F:iron ion binding"/>
    <property type="evidence" value="ECO:0007669"/>
    <property type="project" value="InterPro"/>
</dbReference>
<dbReference type="GO" id="GO:0043177">
    <property type="term" value="F:organic acid binding"/>
    <property type="evidence" value="ECO:0007669"/>
    <property type="project" value="TreeGrafter"/>
</dbReference>
<dbReference type="GO" id="GO:0019825">
    <property type="term" value="F:oxygen binding"/>
    <property type="evidence" value="ECO:0007669"/>
    <property type="project" value="InterPro"/>
</dbReference>
<dbReference type="GO" id="GO:0005344">
    <property type="term" value="F:oxygen carrier activity"/>
    <property type="evidence" value="ECO:0007669"/>
    <property type="project" value="UniProtKB-KW"/>
</dbReference>
<dbReference type="GO" id="GO:0004601">
    <property type="term" value="F:peroxidase activity"/>
    <property type="evidence" value="ECO:0007669"/>
    <property type="project" value="TreeGrafter"/>
</dbReference>
<dbReference type="GO" id="GO:0042744">
    <property type="term" value="P:hydrogen peroxide catabolic process"/>
    <property type="evidence" value="ECO:0007669"/>
    <property type="project" value="TreeGrafter"/>
</dbReference>
<dbReference type="CDD" id="cd08927">
    <property type="entry name" value="Hb-alpha-like"/>
    <property type="match status" value="1"/>
</dbReference>
<dbReference type="FunFam" id="1.10.490.10:FF:000002">
    <property type="entry name" value="Hemoglobin subunit alpha"/>
    <property type="match status" value="1"/>
</dbReference>
<dbReference type="Gene3D" id="1.10.490.10">
    <property type="entry name" value="Globins"/>
    <property type="match status" value="1"/>
</dbReference>
<dbReference type="InterPro" id="IPR000971">
    <property type="entry name" value="Globin"/>
</dbReference>
<dbReference type="InterPro" id="IPR009050">
    <property type="entry name" value="Globin-like_sf"/>
</dbReference>
<dbReference type="InterPro" id="IPR012292">
    <property type="entry name" value="Globin/Proto"/>
</dbReference>
<dbReference type="InterPro" id="IPR002338">
    <property type="entry name" value="Hemoglobin_a-typ"/>
</dbReference>
<dbReference type="InterPro" id="IPR050056">
    <property type="entry name" value="Hemoglobin_oxygen_transport"/>
</dbReference>
<dbReference type="InterPro" id="IPR002339">
    <property type="entry name" value="Hemoglobin_pi"/>
</dbReference>
<dbReference type="PANTHER" id="PTHR11442">
    <property type="entry name" value="HEMOGLOBIN FAMILY MEMBER"/>
    <property type="match status" value="1"/>
</dbReference>
<dbReference type="PANTHER" id="PTHR11442:SF48">
    <property type="entry name" value="HEMOGLOBIN SUBUNIT ALPHA"/>
    <property type="match status" value="1"/>
</dbReference>
<dbReference type="Pfam" id="PF00042">
    <property type="entry name" value="Globin"/>
    <property type="match status" value="1"/>
</dbReference>
<dbReference type="PRINTS" id="PR00612">
    <property type="entry name" value="ALPHAHAEM"/>
</dbReference>
<dbReference type="PRINTS" id="PR00815">
    <property type="entry name" value="PIHAEM"/>
</dbReference>
<dbReference type="SUPFAM" id="SSF46458">
    <property type="entry name" value="Globin-like"/>
    <property type="match status" value="1"/>
</dbReference>
<dbReference type="PROSITE" id="PS01033">
    <property type="entry name" value="GLOBIN"/>
    <property type="match status" value="1"/>
</dbReference>
<keyword id="KW-0903">Direct protein sequencing</keyword>
<keyword id="KW-0349">Heme</keyword>
<keyword id="KW-0408">Iron</keyword>
<keyword id="KW-0479">Metal-binding</keyword>
<keyword id="KW-0561">Oxygen transport</keyword>
<keyword id="KW-0813">Transport</keyword>
<organism>
    <name type="scientific">Phasianus colchicus colchicus</name>
    <name type="common">Black-necked pheasant</name>
    <dbReference type="NCBI Taxonomy" id="9057"/>
    <lineage>
        <taxon>Eukaryota</taxon>
        <taxon>Metazoa</taxon>
        <taxon>Chordata</taxon>
        <taxon>Craniata</taxon>
        <taxon>Vertebrata</taxon>
        <taxon>Euteleostomi</taxon>
        <taxon>Archelosauria</taxon>
        <taxon>Archosauria</taxon>
        <taxon>Dinosauria</taxon>
        <taxon>Saurischia</taxon>
        <taxon>Theropoda</taxon>
        <taxon>Coelurosauria</taxon>
        <taxon>Aves</taxon>
        <taxon>Neognathae</taxon>
        <taxon>Galloanserae</taxon>
        <taxon>Galliformes</taxon>
        <taxon>Phasianidae</taxon>
        <taxon>Phasianinae</taxon>
        <taxon>Phasianus</taxon>
    </lineage>
</organism>
<sequence length="141" mass="15344">VLSAADKNNVKGIFTKIAGHAEEYGAEALERMFITYPSTKTYFPHFDLSHGSAQIKGHGKKVVAALIEAVNHIDDITGTLSKLSDLHAHKLRVDPVNFKLLGQCFLVVVAIHHPSALTPEVHASLDKFLCAVGTVLTAKYR</sequence>
<protein>
    <recommendedName>
        <fullName>Hemoglobin subunit alpha-A</fullName>
    </recommendedName>
    <alternativeName>
        <fullName>Alpha-A-globin</fullName>
    </alternativeName>
    <alternativeName>
        <fullName>Hemoglobin alpha-A chain</fullName>
    </alternativeName>
</protein>
<reference key="1">
    <citation type="journal article" date="1982" name="Hoppe-Seyler's Z. Physiol. Chem.">
        <title>Hemoglobins, XLV. The amino acid sequence of pheasant (Phasianus colchicus colchicus) hemoglobins.</title>
        <authorList>
            <person name="Braunitzer G."/>
            <person name="Godovac J."/>
        </authorList>
    </citation>
    <scope>PROTEIN SEQUENCE</scope>
</reference>
<proteinExistence type="evidence at protein level"/>
<evidence type="ECO:0000255" key="1">
    <source>
        <dbReference type="PROSITE-ProRule" id="PRU00238"/>
    </source>
</evidence>
<gene>
    <name type="primary">HBAA</name>
</gene>
<feature type="chain" id="PRO_0000052727" description="Hemoglobin subunit alpha-A">
    <location>
        <begin position="1"/>
        <end position="141"/>
    </location>
</feature>
<feature type="domain" description="Globin" evidence="1">
    <location>
        <begin position="1"/>
        <end position="141"/>
    </location>
</feature>
<feature type="binding site" evidence="1">
    <location>
        <position position="58"/>
    </location>
    <ligand>
        <name>O2</name>
        <dbReference type="ChEBI" id="CHEBI:15379"/>
    </ligand>
</feature>
<feature type="binding site" description="proximal binding residue" evidence="1">
    <location>
        <position position="87"/>
    </location>
    <ligand>
        <name>heme b</name>
        <dbReference type="ChEBI" id="CHEBI:60344"/>
    </ligand>
    <ligandPart>
        <name>Fe</name>
        <dbReference type="ChEBI" id="CHEBI:18248"/>
    </ligandPart>
</feature>
<accession>P01995</accession>